<accession>A1KL57</accession>
<feature type="chain" id="PRO_0000321778" description="Endoribonuclease YbeY">
    <location>
        <begin position="1"/>
        <end position="177"/>
    </location>
</feature>
<feature type="binding site" evidence="1">
    <location>
        <position position="118"/>
    </location>
    <ligand>
        <name>Zn(2+)</name>
        <dbReference type="ChEBI" id="CHEBI:29105"/>
        <note>catalytic</note>
    </ligand>
</feature>
<feature type="binding site" evidence="1">
    <location>
        <position position="122"/>
    </location>
    <ligand>
        <name>Zn(2+)</name>
        <dbReference type="ChEBI" id="CHEBI:29105"/>
        <note>catalytic</note>
    </ligand>
</feature>
<feature type="binding site" evidence="1">
    <location>
        <position position="128"/>
    </location>
    <ligand>
        <name>Zn(2+)</name>
        <dbReference type="ChEBI" id="CHEBI:29105"/>
        <note>catalytic</note>
    </ligand>
</feature>
<proteinExistence type="inferred from homology"/>
<gene>
    <name evidence="1" type="primary">ybeY</name>
    <name type="ordered locus">BCG_2381c</name>
</gene>
<dbReference type="EC" id="3.1.-.-" evidence="1"/>
<dbReference type="EMBL" id="AM408590">
    <property type="protein sequence ID" value="CAL72369.1"/>
    <property type="status" value="ALT_INIT"/>
    <property type="molecule type" value="Genomic_DNA"/>
</dbReference>
<dbReference type="RefSeq" id="WP_003899292.1">
    <property type="nucleotide sequence ID" value="NC_008769.1"/>
</dbReference>
<dbReference type="SMR" id="A1KL57"/>
<dbReference type="KEGG" id="mbb:BCG_2381c"/>
<dbReference type="HOGENOM" id="CLU_106710_3_2_11"/>
<dbReference type="Proteomes" id="UP000001472">
    <property type="component" value="Chromosome"/>
</dbReference>
<dbReference type="GO" id="GO:0005737">
    <property type="term" value="C:cytoplasm"/>
    <property type="evidence" value="ECO:0007669"/>
    <property type="project" value="UniProtKB-SubCell"/>
</dbReference>
<dbReference type="GO" id="GO:0004222">
    <property type="term" value="F:metalloendopeptidase activity"/>
    <property type="evidence" value="ECO:0007669"/>
    <property type="project" value="InterPro"/>
</dbReference>
<dbReference type="GO" id="GO:0004521">
    <property type="term" value="F:RNA endonuclease activity"/>
    <property type="evidence" value="ECO:0007669"/>
    <property type="project" value="UniProtKB-UniRule"/>
</dbReference>
<dbReference type="GO" id="GO:0008270">
    <property type="term" value="F:zinc ion binding"/>
    <property type="evidence" value="ECO:0007669"/>
    <property type="project" value="UniProtKB-UniRule"/>
</dbReference>
<dbReference type="GO" id="GO:0006364">
    <property type="term" value="P:rRNA processing"/>
    <property type="evidence" value="ECO:0007669"/>
    <property type="project" value="UniProtKB-UniRule"/>
</dbReference>
<dbReference type="Gene3D" id="3.40.390.30">
    <property type="entry name" value="Metalloproteases ('zincins'), catalytic domain"/>
    <property type="match status" value="1"/>
</dbReference>
<dbReference type="HAMAP" id="MF_00009">
    <property type="entry name" value="Endoribonucl_YbeY"/>
    <property type="match status" value="1"/>
</dbReference>
<dbReference type="InterPro" id="IPR023091">
    <property type="entry name" value="MetalPrtase_cat_dom_sf_prd"/>
</dbReference>
<dbReference type="InterPro" id="IPR002036">
    <property type="entry name" value="YbeY"/>
</dbReference>
<dbReference type="InterPro" id="IPR020549">
    <property type="entry name" value="YbeY_CS"/>
</dbReference>
<dbReference type="NCBIfam" id="TIGR00043">
    <property type="entry name" value="rRNA maturation RNase YbeY"/>
    <property type="match status" value="1"/>
</dbReference>
<dbReference type="PANTHER" id="PTHR46986">
    <property type="entry name" value="ENDORIBONUCLEASE YBEY, CHLOROPLASTIC"/>
    <property type="match status" value="1"/>
</dbReference>
<dbReference type="PANTHER" id="PTHR46986:SF1">
    <property type="entry name" value="ENDORIBONUCLEASE YBEY, CHLOROPLASTIC"/>
    <property type="match status" value="1"/>
</dbReference>
<dbReference type="Pfam" id="PF02130">
    <property type="entry name" value="YbeY"/>
    <property type="match status" value="1"/>
</dbReference>
<dbReference type="SUPFAM" id="SSF55486">
    <property type="entry name" value="Metalloproteases ('zincins'), catalytic domain"/>
    <property type="match status" value="1"/>
</dbReference>
<dbReference type="PROSITE" id="PS01306">
    <property type="entry name" value="UPF0054"/>
    <property type="match status" value="1"/>
</dbReference>
<comment type="function">
    <text evidence="1">Single strand-specific metallo-endoribonuclease involved in late-stage 70S ribosome quality control and in maturation of the 3' terminus of the 16S rRNA.</text>
</comment>
<comment type="cofactor">
    <cofactor evidence="1">
        <name>Zn(2+)</name>
        <dbReference type="ChEBI" id="CHEBI:29105"/>
    </cofactor>
    <text evidence="1">Binds 1 zinc ion.</text>
</comment>
<comment type="subcellular location">
    <subcellularLocation>
        <location evidence="1">Cytoplasm</location>
    </subcellularLocation>
</comment>
<comment type="similarity">
    <text evidence="1">Belongs to the endoribonuclease YbeY family.</text>
</comment>
<comment type="sequence caution" evidence="2">
    <conflict type="erroneous initiation">
        <sequence resource="EMBL-CDS" id="CAL72369"/>
    </conflict>
</comment>
<reference key="1">
    <citation type="journal article" date="2007" name="Proc. Natl. Acad. Sci. U.S.A.">
        <title>Genome plasticity of BCG and impact on vaccine efficacy.</title>
        <authorList>
            <person name="Brosch R."/>
            <person name="Gordon S.V."/>
            <person name="Garnier T."/>
            <person name="Eiglmeier K."/>
            <person name="Frigui W."/>
            <person name="Valenti P."/>
            <person name="Dos Santos S."/>
            <person name="Duthoy S."/>
            <person name="Lacroix C."/>
            <person name="Garcia-Pelayo C."/>
            <person name="Inwald J.K."/>
            <person name="Golby P."/>
            <person name="Garcia J.N."/>
            <person name="Hewinson R.G."/>
            <person name="Behr M.A."/>
            <person name="Quail M.A."/>
            <person name="Churcher C."/>
            <person name="Barrell B.G."/>
            <person name="Parkhill J."/>
            <person name="Cole S.T."/>
        </authorList>
    </citation>
    <scope>NUCLEOTIDE SEQUENCE [LARGE SCALE GENOMIC DNA]</scope>
    <source>
        <strain>BCG / Pasteur 1173P2</strain>
    </source>
</reference>
<keyword id="KW-0963">Cytoplasm</keyword>
<keyword id="KW-0255">Endonuclease</keyword>
<keyword id="KW-0378">Hydrolase</keyword>
<keyword id="KW-0479">Metal-binding</keyword>
<keyword id="KW-0540">Nuclease</keyword>
<keyword id="KW-0690">Ribosome biogenesis</keyword>
<keyword id="KW-0698">rRNA processing</keyword>
<keyword id="KW-0862">Zinc</keyword>
<organism>
    <name type="scientific">Mycobacterium bovis (strain BCG / Pasteur 1173P2)</name>
    <dbReference type="NCBI Taxonomy" id="410289"/>
    <lineage>
        <taxon>Bacteria</taxon>
        <taxon>Bacillati</taxon>
        <taxon>Actinomycetota</taxon>
        <taxon>Actinomycetes</taxon>
        <taxon>Mycobacteriales</taxon>
        <taxon>Mycobacteriaceae</taxon>
        <taxon>Mycobacterium</taxon>
        <taxon>Mycobacterium tuberculosis complex</taxon>
    </lineage>
</organism>
<name>YBEY_MYCBP</name>
<protein>
    <recommendedName>
        <fullName evidence="1">Endoribonuclease YbeY</fullName>
        <ecNumber evidence="1">3.1.-.-</ecNumber>
    </recommendedName>
</protein>
<evidence type="ECO:0000255" key="1">
    <source>
        <dbReference type="HAMAP-Rule" id="MF_00009"/>
    </source>
</evidence>
<evidence type="ECO:0000305" key="2"/>
<sequence length="177" mass="19656">MSIEVANESGIDVSEAELVSVARFVIAKMDVNPCAELSMLLLDTAAMADLHMRWMDLPGPTDVMSFPMDELEPGGRPDAPEPGPSMLGDIVLCPEFAAEQAAAAGHSLGHELALLTIHGVLHLLGYDHAEPDEEKEMFALQDRLLEEWVADQVEAYQHDRQDEKDRRLLDKSRYFDL</sequence>